<feature type="chain" id="PRO_1000048537" description="DNA replication and repair protein RecF">
    <location>
        <begin position="1"/>
        <end position="365"/>
    </location>
</feature>
<feature type="binding site" evidence="1">
    <location>
        <begin position="30"/>
        <end position="37"/>
    </location>
    <ligand>
        <name>ATP</name>
        <dbReference type="ChEBI" id="CHEBI:30616"/>
    </ligand>
</feature>
<comment type="function">
    <text evidence="1">The RecF protein is involved in DNA metabolism; it is required for DNA replication and normal SOS inducibility. RecF binds preferentially to single-stranded, linear DNA. It also seems to bind ATP.</text>
</comment>
<comment type="subcellular location">
    <subcellularLocation>
        <location evidence="1">Cytoplasm</location>
    </subcellularLocation>
</comment>
<comment type="similarity">
    <text evidence="1">Belongs to the RecF family.</text>
</comment>
<gene>
    <name evidence="1" type="primary">recF</name>
    <name type="ordered locus">LBJ_0006</name>
</gene>
<protein>
    <recommendedName>
        <fullName evidence="1">DNA replication and repair protein RecF</fullName>
    </recommendedName>
</protein>
<name>RECF_LEPBJ</name>
<reference key="1">
    <citation type="journal article" date="2006" name="Proc. Natl. Acad. Sci. U.S.A.">
        <title>Genome reduction in Leptospira borgpetersenii reflects limited transmission potential.</title>
        <authorList>
            <person name="Bulach D.M."/>
            <person name="Zuerner R.L."/>
            <person name="Wilson P."/>
            <person name="Seemann T."/>
            <person name="McGrath A."/>
            <person name="Cullen P.A."/>
            <person name="Davis J."/>
            <person name="Johnson M."/>
            <person name="Kuczek E."/>
            <person name="Alt D.P."/>
            <person name="Peterson-Burch B."/>
            <person name="Coppel R.L."/>
            <person name="Rood J.I."/>
            <person name="Davies J.K."/>
            <person name="Adler B."/>
        </authorList>
    </citation>
    <scope>NUCLEOTIDE SEQUENCE [LARGE SCALE GENOMIC DNA]</scope>
    <source>
        <strain>JB197</strain>
    </source>
</reference>
<dbReference type="EMBL" id="CP000350">
    <property type="protein sequence ID" value="ABJ74765.1"/>
    <property type="molecule type" value="Genomic_DNA"/>
</dbReference>
<dbReference type="RefSeq" id="WP_011669139.1">
    <property type="nucleotide sequence ID" value="NC_008510.1"/>
</dbReference>
<dbReference type="SMR" id="Q04WF5"/>
<dbReference type="KEGG" id="lbj:LBJ_0006"/>
<dbReference type="HOGENOM" id="CLU_040267_0_1_12"/>
<dbReference type="Proteomes" id="UP000000656">
    <property type="component" value="Chromosome 1"/>
</dbReference>
<dbReference type="GO" id="GO:0005737">
    <property type="term" value="C:cytoplasm"/>
    <property type="evidence" value="ECO:0007669"/>
    <property type="project" value="UniProtKB-SubCell"/>
</dbReference>
<dbReference type="GO" id="GO:0005524">
    <property type="term" value="F:ATP binding"/>
    <property type="evidence" value="ECO:0007669"/>
    <property type="project" value="UniProtKB-UniRule"/>
</dbReference>
<dbReference type="GO" id="GO:0003697">
    <property type="term" value="F:single-stranded DNA binding"/>
    <property type="evidence" value="ECO:0007669"/>
    <property type="project" value="UniProtKB-UniRule"/>
</dbReference>
<dbReference type="GO" id="GO:0006260">
    <property type="term" value="P:DNA replication"/>
    <property type="evidence" value="ECO:0007669"/>
    <property type="project" value="UniProtKB-UniRule"/>
</dbReference>
<dbReference type="GO" id="GO:0000731">
    <property type="term" value="P:DNA synthesis involved in DNA repair"/>
    <property type="evidence" value="ECO:0007669"/>
    <property type="project" value="TreeGrafter"/>
</dbReference>
<dbReference type="GO" id="GO:0006302">
    <property type="term" value="P:double-strand break repair"/>
    <property type="evidence" value="ECO:0007669"/>
    <property type="project" value="TreeGrafter"/>
</dbReference>
<dbReference type="GO" id="GO:0009432">
    <property type="term" value="P:SOS response"/>
    <property type="evidence" value="ECO:0007669"/>
    <property type="project" value="UniProtKB-UniRule"/>
</dbReference>
<dbReference type="Gene3D" id="3.40.50.300">
    <property type="entry name" value="P-loop containing nucleotide triphosphate hydrolases"/>
    <property type="match status" value="1"/>
</dbReference>
<dbReference type="Gene3D" id="1.20.1050.90">
    <property type="entry name" value="RecF/RecN/SMC, N-terminal domain"/>
    <property type="match status" value="1"/>
</dbReference>
<dbReference type="HAMAP" id="MF_00365">
    <property type="entry name" value="RecF"/>
    <property type="match status" value="1"/>
</dbReference>
<dbReference type="InterPro" id="IPR001238">
    <property type="entry name" value="DNA-binding_RecF"/>
</dbReference>
<dbReference type="InterPro" id="IPR018078">
    <property type="entry name" value="DNA-binding_RecF_CS"/>
</dbReference>
<dbReference type="InterPro" id="IPR027417">
    <property type="entry name" value="P-loop_NTPase"/>
</dbReference>
<dbReference type="InterPro" id="IPR003395">
    <property type="entry name" value="RecF/RecN/SMC_N"/>
</dbReference>
<dbReference type="InterPro" id="IPR042174">
    <property type="entry name" value="RecF_2"/>
</dbReference>
<dbReference type="NCBIfam" id="TIGR00611">
    <property type="entry name" value="recf"/>
    <property type="match status" value="1"/>
</dbReference>
<dbReference type="PANTHER" id="PTHR32182">
    <property type="entry name" value="DNA REPLICATION AND REPAIR PROTEIN RECF"/>
    <property type="match status" value="1"/>
</dbReference>
<dbReference type="PANTHER" id="PTHR32182:SF0">
    <property type="entry name" value="DNA REPLICATION AND REPAIR PROTEIN RECF"/>
    <property type="match status" value="1"/>
</dbReference>
<dbReference type="Pfam" id="PF02463">
    <property type="entry name" value="SMC_N"/>
    <property type="match status" value="1"/>
</dbReference>
<dbReference type="SUPFAM" id="SSF52540">
    <property type="entry name" value="P-loop containing nucleoside triphosphate hydrolases"/>
    <property type="match status" value="1"/>
</dbReference>
<dbReference type="PROSITE" id="PS00617">
    <property type="entry name" value="RECF_1"/>
    <property type="match status" value="1"/>
</dbReference>
<dbReference type="PROSITE" id="PS00618">
    <property type="entry name" value="RECF_2"/>
    <property type="match status" value="1"/>
</dbReference>
<proteinExistence type="inferred from homology"/>
<evidence type="ECO:0000255" key="1">
    <source>
        <dbReference type="HAMAP-Rule" id="MF_00365"/>
    </source>
</evidence>
<sequence length="365" mass="42084">MFLKHLTLQNFRSYEELSLDFNSRLIFFVGDNGEGKTNLLEAICMLSWLKSFRESEDSNLIRWGSENYFLRGKIKGDQKESVLEVGFTAKPTVKRKLKFNQEEVKKRTDLIGKFITVLLTPMDLKIIEGGPAERRKFIDAFISSFDPFYLECLLEYNKILKHRNALLKTGISDASHLSIWDRKLIEKGVLILNKRKEIVFGLNSFYQPNLNKLSGGKDELEMIYGPNVKDKDEFVEKLGRNLGKDLRLGYTSVGIHRDDLFIGADKRDITEFGSQGQKRSTVIALKAATFNYYRNVLDTMPVLLIDDVIRELDVKRREYFVDLVINAGQAFFTTTDLEGIQDYVGKLKDQKQIFLIQQGNIQFAK</sequence>
<accession>Q04WF5</accession>
<keyword id="KW-0067">ATP-binding</keyword>
<keyword id="KW-0963">Cytoplasm</keyword>
<keyword id="KW-0227">DNA damage</keyword>
<keyword id="KW-0234">DNA repair</keyword>
<keyword id="KW-0235">DNA replication</keyword>
<keyword id="KW-0238">DNA-binding</keyword>
<keyword id="KW-0547">Nucleotide-binding</keyword>
<keyword id="KW-0742">SOS response</keyword>
<organism>
    <name type="scientific">Leptospira borgpetersenii serovar Hardjo-bovis (strain JB197)</name>
    <dbReference type="NCBI Taxonomy" id="355277"/>
    <lineage>
        <taxon>Bacteria</taxon>
        <taxon>Pseudomonadati</taxon>
        <taxon>Spirochaetota</taxon>
        <taxon>Spirochaetia</taxon>
        <taxon>Leptospirales</taxon>
        <taxon>Leptospiraceae</taxon>
        <taxon>Leptospira</taxon>
    </lineage>
</organism>